<dbReference type="EMBL" id="CP000089">
    <property type="protein sequence ID" value="AAZ48836.1"/>
    <property type="molecule type" value="Genomic_DNA"/>
</dbReference>
<dbReference type="SMR" id="Q477Z5"/>
<dbReference type="STRING" id="159087.Daro_4110"/>
<dbReference type="KEGG" id="dar:Daro_4110"/>
<dbReference type="eggNOG" id="COG0711">
    <property type="taxonomic scope" value="Bacteria"/>
</dbReference>
<dbReference type="HOGENOM" id="CLU_079215_4_5_4"/>
<dbReference type="OrthoDB" id="9788020at2"/>
<dbReference type="GO" id="GO:0005886">
    <property type="term" value="C:plasma membrane"/>
    <property type="evidence" value="ECO:0007669"/>
    <property type="project" value="UniProtKB-SubCell"/>
</dbReference>
<dbReference type="GO" id="GO:0045259">
    <property type="term" value="C:proton-transporting ATP synthase complex"/>
    <property type="evidence" value="ECO:0007669"/>
    <property type="project" value="UniProtKB-KW"/>
</dbReference>
<dbReference type="GO" id="GO:0046933">
    <property type="term" value="F:proton-transporting ATP synthase activity, rotational mechanism"/>
    <property type="evidence" value="ECO:0007669"/>
    <property type="project" value="UniProtKB-UniRule"/>
</dbReference>
<dbReference type="GO" id="GO:0046961">
    <property type="term" value="F:proton-transporting ATPase activity, rotational mechanism"/>
    <property type="evidence" value="ECO:0007669"/>
    <property type="project" value="TreeGrafter"/>
</dbReference>
<dbReference type="CDD" id="cd06503">
    <property type="entry name" value="ATP-synt_Fo_b"/>
    <property type="match status" value="1"/>
</dbReference>
<dbReference type="Gene3D" id="1.20.5.620">
    <property type="entry name" value="F1F0 ATP synthase subunit B, membrane domain"/>
    <property type="match status" value="1"/>
</dbReference>
<dbReference type="HAMAP" id="MF_01398">
    <property type="entry name" value="ATP_synth_b_bprime"/>
    <property type="match status" value="1"/>
</dbReference>
<dbReference type="InterPro" id="IPR028987">
    <property type="entry name" value="ATP_synth_B-like_membr_sf"/>
</dbReference>
<dbReference type="InterPro" id="IPR002146">
    <property type="entry name" value="ATP_synth_b/b'su_bac/chlpt"/>
</dbReference>
<dbReference type="InterPro" id="IPR005864">
    <property type="entry name" value="ATP_synth_F0_bsu_bac"/>
</dbReference>
<dbReference type="InterPro" id="IPR050059">
    <property type="entry name" value="ATP_synthase_B_chain"/>
</dbReference>
<dbReference type="NCBIfam" id="TIGR01144">
    <property type="entry name" value="ATP_synt_b"/>
    <property type="match status" value="1"/>
</dbReference>
<dbReference type="NCBIfam" id="NF004411">
    <property type="entry name" value="PRK05759.1-2"/>
    <property type="match status" value="1"/>
</dbReference>
<dbReference type="PANTHER" id="PTHR33445:SF1">
    <property type="entry name" value="ATP SYNTHASE SUBUNIT B"/>
    <property type="match status" value="1"/>
</dbReference>
<dbReference type="PANTHER" id="PTHR33445">
    <property type="entry name" value="ATP SYNTHASE SUBUNIT B', CHLOROPLASTIC"/>
    <property type="match status" value="1"/>
</dbReference>
<dbReference type="Pfam" id="PF00430">
    <property type="entry name" value="ATP-synt_B"/>
    <property type="match status" value="1"/>
</dbReference>
<dbReference type="SUPFAM" id="SSF81573">
    <property type="entry name" value="F1F0 ATP synthase subunit B, membrane domain"/>
    <property type="match status" value="1"/>
</dbReference>
<proteinExistence type="inferred from homology"/>
<accession>Q477Z5</accession>
<gene>
    <name evidence="1" type="primary">atpF</name>
    <name type="ordered locus">Daro_4110</name>
</gene>
<keyword id="KW-0066">ATP synthesis</keyword>
<keyword id="KW-0997">Cell inner membrane</keyword>
<keyword id="KW-1003">Cell membrane</keyword>
<keyword id="KW-0138">CF(0)</keyword>
<keyword id="KW-0375">Hydrogen ion transport</keyword>
<keyword id="KW-0406">Ion transport</keyword>
<keyword id="KW-0472">Membrane</keyword>
<keyword id="KW-0812">Transmembrane</keyword>
<keyword id="KW-1133">Transmembrane helix</keyword>
<keyword id="KW-0813">Transport</keyword>
<feature type="chain" id="PRO_0000368451" description="ATP synthase subunit b">
    <location>
        <begin position="1"/>
        <end position="156"/>
    </location>
</feature>
<feature type="transmembrane region" description="Helical" evidence="1">
    <location>
        <begin position="7"/>
        <end position="26"/>
    </location>
</feature>
<sequence>MNINATLIGQAIWFALFIWITMKYVWPPLQKAMADRQAQIAEGLAAAERGKHEQELAAKRSADALREAKEKSADFVAQAEKRAQQIVEEAKGTAKIEADKVVAGAKAEIEQEVERAKQQLRERVAELAVAGAEKILRKEINASAHADMLAALKQDL</sequence>
<comment type="function">
    <text evidence="1">F(1)F(0) ATP synthase produces ATP from ADP in the presence of a proton or sodium gradient. F-type ATPases consist of two structural domains, F(1) containing the extramembraneous catalytic core and F(0) containing the membrane proton channel, linked together by a central stalk and a peripheral stalk. During catalysis, ATP synthesis in the catalytic domain of F(1) is coupled via a rotary mechanism of the central stalk subunits to proton translocation.</text>
</comment>
<comment type="function">
    <text evidence="1">Component of the F(0) channel, it forms part of the peripheral stalk, linking F(1) to F(0).</text>
</comment>
<comment type="subunit">
    <text evidence="1">F-type ATPases have 2 components, F(1) - the catalytic core - and F(0) - the membrane proton channel. F(1) has five subunits: alpha(3), beta(3), gamma(1), delta(1), epsilon(1). F(0) has three main subunits: a(1), b(2) and c(10-14). The alpha and beta chains form an alternating ring which encloses part of the gamma chain. F(1) is attached to F(0) by a central stalk formed by the gamma and epsilon chains, while a peripheral stalk is formed by the delta and b chains.</text>
</comment>
<comment type="subcellular location">
    <subcellularLocation>
        <location evidence="1">Cell inner membrane</location>
        <topology evidence="1">Single-pass membrane protein</topology>
    </subcellularLocation>
</comment>
<comment type="similarity">
    <text evidence="1">Belongs to the ATPase B chain family.</text>
</comment>
<evidence type="ECO:0000255" key="1">
    <source>
        <dbReference type="HAMAP-Rule" id="MF_01398"/>
    </source>
</evidence>
<protein>
    <recommendedName>
        <fullName evidence="1">ATP synthase subunit b</fullName>
    </recommendedName>
    <alternativeName>
        <fullName evidence="1">ATP synthase F(0) sector subunit b</fullName>
    </alternativeName>
    <alternativeName>
        <fullName evidence="1">ATPase subunit I</fullName>
    </alternativeName>
    <alternativeName>
        <fullName evidence="1">F-type ATPase subunit b</fullName>
        <shortName evidence="1">F-ATPase subunit b</shortName>
    </alternativeName>
</protein>
<name>ATPF_DECAR</name>
<organism>
    <name type="scientific">Dechloromonas aromatica (strain RCB)</name>
    <dbReference type="NCBI Taxonomy" id="159087"/>
    <lineage>
        <taxon>Bacteria</taxon>
        <taxon>Pseudomonadati</taxon>
        <taxon>Pseudomonadota</taxon>
        <taxon>Betaproteobacteria</taxon>
        <taxon>Rhodocyclales</taxon>
        <taxon>Azonexaceae</taxon>
        <taxon>Dechloromonas</taxon>
    </lineage>
</organism>
<reference key="1">
    <citation type="journal article" date="2009" name="BMC Genomics">
        <title>Metabolic analysis of the soil microbe Dechloromonas aromatica str. RCB: indications of a surprisingly complex life-style and cryptic anaerobic pathways for aromatic degradation.</title>
        <authorList>
            <person name="Salinero K.K."/>
            <person name="Keller K."/>
            <person name="Feil W.S."/>
            <person name="Feil H."/>
            <person name="Trong S."/>
            <person name="Di Bartolo G."/>
            <person name="Lapidus A."/>
        </authorList>
    </citation>
    <scope>NUCLEOTIDE SEQUENCE [LARGE SCALE GENOMIC DNA]</scope>
    <source>
        <strain>RCB</strain>
    </source>
</reference>